<feature type="chain" id="PRO_0000243855" description="Small ribosomal subunit protein bS16">
    <location>
        <begin position="1"/>
        <end position="84"/>
    </location>
</feature>
<keyword id="KW-0687">Ribonucleoprotein</keyword>
<keyword id="KW-0689">Ribosomal protein</keyword>
<name>RS16_CUPPJ</name>
<accession>Q46Y82</accession>
<reference key="1">
    <citation type="journal article" date="2010" name="PLoS ONE">
        <title>The complete multipartite genome sequence of Cupriavidus necator JMP134, a versatile pollutant degrader.</title>
        <authorList>
            <person name="Lykidis A."/>
            <person name="Perez-Pantoja D."/>
            <person name="Ledger T."/>
            <person name="Mavromatis K."/>
            <person name="Anderson I.J."/>
            <person name="Ivanova N.N."/>
            <person name="Hooper S.D."/>
            <person name="Lapidus A."/>
            <person name="Lucas S."/>
            <person name="Gonzalez B."/>
            <person name="Kyrpides N.C."/>
        </authorList>
    </citation>
    <scope>NUCLEOTIDE SEQUENCE [LARGE SCALE GENOMIC DNA]</scope>
    <source>
        <strain>JMP134 / LMG 1197</strain>
    </source>
</reference>
<gene>
    <name evidence="1" type="primary">rpsP</name>
    <name type="ordered locus">Reut_A2540</name>
</gene>
<protein>
    <recommendedName>
        <fullName evidence="1">Small ribosomal subunit protein bS16</fullName>
    </recommendedName>
    <alternativeName>
        <fullName evidence="2">30S ribosomal protein S16</fullName>
    </alternativeName>
</protein>
<dbReference type="EMBL" id="CP000090">
    <property type="protein sequence ID" value="AAZ61901.1"/>
    <property type="molecule type" value="Genomic_DNA"/>
</dbReference>
<dbReference type="SMR" id="Q46Y82"/>
<dbReference type="STRING" id="264198.Reut_A2540"/>
<dbReference type="KEGG" id="reu:Reut_A2540"/>
<dbReference type="eggNOG" id="COG0228">
    <property type="taxonomic scope" value="Bacteria"/>
</dbReference>
<dbReference type="HOGENOM" id="CLU_100590_5_1_4"/>
<dbReference type="OrthoDB" id="9807878at2"/>
<dbReference type="GO" id="GO:0005737">
    <property type="term" value="C:cytoplasm"/>
    <property type="evidence" value="ECO:0007669"/>
    <property type="project" value="UniProtKB-ARBA"/>
</dbReference>
<dbReference type="GO" id="GO:0015935">
    <property type="term" value="C:small ribosomal subunit"/>
    <property type="evidence" value="ECO:0007669"/>
    <property type="project" value="TreeGrafter"/>
</dbReference>
<dbReference type="GO" id="GO:0003735">
    <property type="term" value="F:structural constituent of ribosome"/>
    <property type="evidence" value="ECO:0007669"/>
    <property type="project" value="InterPro"/>
</dbReference>
<dbReference type="GO" id="GO:0006412">
    <property type="term" value="P:translation"/>
    <property type="evidence" value="ECO:0007669"/>
    <property type="project" value="UniProtKB-UniRule"/>
</dbReference>
<dbReference type="Gene3D" id="3.30.1320.10">
    <property type="match status" value="1"/>
</dbReference>
<dbReference type="HAMAP" id="MF_00385">
    <property type="entry name" value="Ribosomal_bS16"/>
    <property type="match status" value="1"/>
</dbReference>
<dbReference type="InterPro" id="IPR000307">
    <property type="entry name" value="Ribosomal_bS16"/>
</dbReference>
<dbReference type="InterPro" id="IPR023803">
    <property type="entry name" value="Ribosomal_bS16_dom_sf"/>
</dbReference>
<dbReference type="NCBIfam" id="TIGR00002">
    <property type="entry name" value="S16"/>
    <property type="match status" value="1"/>
</dbReference>
<dbReference type="PANTHER" id="PTHR12919">
    <property type="entry name" value="30S RIBOSOMAL PROTEIN S16"/>
    <property type="match status" value="1"/>
</dbReference>
<dbReference type="PANTHER" id="PTHR12919:SF20">
    <property type="entry name" value="SMALL RIBOSOMAL SUBUNIT PROTEIN BS16M"/>
    <property type="match status" value="1"/>
</dbReference>
<dbReference type="Pfam" id="PF00886">
    <property type="entry name" value="Ribosomal_S16"/>
    <property type="match status" value="1"/>
</dbReference>
<dbReference type="SUPFAM" id="SSF54565">
    <property type="entry name" value="Ribosomal protein S16"/>
    <property type="match status" value="1"/>
</dbReference>
<sequence>MVVIRLARGGSKKRPFFNIVATDSRNRRDGRFIERVGFYNPLASEGEEGLRVVADRLAYWQGVGAQLSPTVARLVKQNAAKAAA</sequence>
<comment type="similarity">
    <text evidence="1">Belongs to the bacterial ribosomal protein bS16 family.</text>
</comment>
<evidence type="ECO:0000255" key="1">
    <source>
        <dbReference type="HAMAP-Rule" id="MF_00385"/>
    </source>
</evidence>
<evidence type="ECO:0000305" key="2"/>
<organism>
    <name type="scientific">Cupriavidus pinatubonensis (strain JMP 134 / LMG 1197)</name>
    <name type="common">Cupriavidus necator (strain JMP 134)</name>
    <dbReference type="NCBI Taxonomy" id="264198"/>
    <lineage>
        <taxon>Bacteria</taxon>
        <taxon>Pseudomonadati</taxon>
        <taxon>Pseudomonadota</taxon>
        <taxon>Betaproteobacteria</taxon>
        <taxon>Burkholderiales</taxon>
        <taxon>Burkholderiaceae</taxon>
        <taxon>Cupriavidus</taxon>
    </lineage>
</organism>
<proteinExistence type="inferred from homology"/>